<comment type="function">
    <text evidence="2">Thiol-specific peroxidase that catalyzes the reduction of hydrogen peroxide and organic hydroperoxides to water and alcohols, respectively. Plays a role in cell protection against oxidative stress by detoxifying peroxides.</text>
</comment>
<comment type="catalytic activity">
    <reaction evidence="2">
        <text>a hydroperoxide + NADH + H(+) = an alcohol + NAD(+) + H2O</text>
        <dbReference type="Rhea" id="RHEA:62628"/>
        <dbReference type="ChEBI" id="CHEBI:15377"/>
        <dbReference type="ChEBI" id="CHEBI:15378"/>
        <dbReference type="ChEBI" id="CHEBI:30879"/>
        <dbReference type="ChEBI" id="CHEBI:35924"/>
        <dbReference type="ChEBI" id="CHEBI:57540"/>
        <dbReference type="ChEBI" id="CHEBI:57945"/>
        <dbReference type="EC" id="1.11.1.26"/>
    </reaction>
</comment>
<comment type="subunit">
    <text evidence="2">Homodimer; disulfide-linked, upon oxidation. 5 homodimers assemble to form a ring-like decamer.</text>
</comment>
<comment type="subcellular location">
    <subcellularLocation>
        <location evidence="3">Cytoplasm</location>
    </subcellularLocation>
</comment>
<comment type="miscellaneous">
    <text evidence="2">The active site is a conserved redox-active cysteine residue, the peroxidatic cysteine (C(P)), which makes the nucleophilic attack on the peroxide substrate. The peroxide oxidizes the C(P)-SH to cysteine sulfenic acid (C(P)-SOH), which then reacts with another cysteine residue, the resolving cysteine (C(R)), to form a disulfide bridge. The disulfide is subsequently reduced by an appropriate electron donor to complete the catalytic cycle. In this typical 2-Cys peroxiredoxin, C(R) is provided by the other dimeric subunit to form an intersubunit disulfide. The disulfide is subsequently reduced by AhpF.</text>
</comment>
<comment type="similarity">
    <text evidence="5">Belongs to the peroxiredoxin family. AhpC/Prx1 subfamily.</text>
</comment>
<organism>
    <name type="scientific">Escherichia coli O6:H1 (strain CFT073 / ATCC 700928 / UPEC)</name>
    <dbReference type="NCBI Taxonomy" id="199310"/>
    <lineage>
        <taxon>Bacteria</taxon>
        <taxon>Pseudomonadati</taxon>
        <taxon>Pseudomonadota</taxon>
        <taxon>Gammaproteobacteria</taxon>
        <taxon>Enterobacterales</taxon>
        <taxon>Enterobacteriaceae</taxon>
        <taxon>Escherichia</taxon>
    </lineage>
</organism>
<feature type="initiator methionine" description="Removed" evidence="1">
    <location>
        <position position="1"/>
    </location>
</feature>
<feature type="chain" id="PRO_0000135117" description="Alkyl hydroperoxide reductase C">
    <location>
        <begin position="2"/>
        <end position="187"/>
    </location>
</feature>
<feature type="domain" description="Thioredoxin" evidence="4">
    <location>
        <begin position="2"/>
        <end position="157"/>
    </location>
</feature>
<feature type="active site" description="Cysteine sulfenic acid (-SOH) intermediate" evidence="2">
    <location>
        <position position="47"/>
    </location>
</feature>
<feature type="modified residue" description="N6-acetyllysine" evidence="1">
    <location>
        <position position="17"/>
    </location>
</feature>
<feature type="modified residue" description="N6-acetyllysine" evidence="1">
    <location>
        <position position="93"/>
    </location>
</feature>
<feature type="modified residue" description="N6-acetyllysine" evidence="1">
    <location>
        <position position="153"/>
    </location>
</feature>
<feature type="modified residue" description="N6-acetyllysine" evidence="1">
    <location>
        <position position="169"/>
    </location>
</feature>
<feature type="modified residue" description="N6-acetyllysine" evidence="1">
    <location>
        <position position="171"/>
    </location>
</feature>
<feature type="disulfide bond" description="Interchain (with C-166); in linked form" evidence="2">
    <location>
        <position position="47"/>
    </location>
</feature>
<feature type="disulfide bond" description="Interchain (with C-47); in linked form" evidence="2">
    <location>
        <position position="166"/>
    </location>
</feature>
<dbReference type="EC" id="1.11.1.26" evidence="2"/>
<dbReference type="EMBL" id="AE014075">
    <property type="protein sequence ID" value="AAN79169.1"/>
    <property type="molecule type" value="Genomic_DNA"/>
</dbReference>
<dbReference type="RefSeq" id="WP_000052796.1">
    <property type="nucleotide sequence ID" value="NZ_CP051263.1"/>
</dbReference>
<dbReference type="SMR" id="P0AE09"/>
<dbReference type="STRING" id="199310.c0694"/>
<dbReference type="GeneID" id="93776879"/>
<dbReference type="KEGG" id="ecc:c0694"/>
<dbReference type="eggNOG" id="COG0450">
    <property type="taxonomic scope" value="Bacteria"/>
</dbReference>
<dbReference type="HOGENOM" id="CLU_042529_21_3_6"/>
<dbReference type="BioCyc" id="ECOL199310:C0694-MONOMER"/>
<dbReference type="Proteomes" id="UP000001410">
    <property type="component" value="Chromosome"/>
</dbReference>
<dbReference type="GO" id="GO:0005829">
    <property type="term" value="C:cytosol"/>
    <property type="evidence" value="ECO:0007669"/>
    <property type="project" value="TreeGrafter"/>
</dbReference>
<dbReference type="GO" id="GO:0102039">
    <property type="term" value="F:NADH-dependent peroxiredoxin activity"/>
    <property type="evidence" value="ECO:0007669"/>
    <property type="project" value="UniProtKB-EC"/>
</dbReference>
<dbReference type="GO" id="GO:0008379">
    <property type="term" value="F:thioredoxin peroxidase activity"/>
    <property type="evidence" value="ECO:0007669"/>
    <property type="project" value="TreeGrafter"/>
</dbReference>
<dbReference type="GO" id="GO:0045454">
    <property type="term" value="P:cell redox homeostasis"/>
    <property type="evidence" value="ECO:0007669"/>
    <property type="project" value="TreeGrafter"/>
</dbReference>
<dbReference type="GO" id="GO:0033554">
    <property type="term" value="P:cellular response to stress"/>
    <property type="evidence" value="ECO:0007669"/>
    <property type="project" value="TreeGrafter"/>
</dbReference>
<dbReference type="GO" id="GO:0042744">
    <property type="term" value="P:hydrogen peroxide catabolic process"/>
    <property type="evidence" value="ECO:0007669"/>
    <property type="project" value="TreeGrafter"/>
</dbReference>
<dbReference type="GO" id="GO:0006979">
    <property type="term" value="P:response to oxidative stress"/>
    <property type="evidence" value="ECO:0007669"/>
    <property type="project" value="InterPro"/>
</dbReference>
<dbReference type="CDD" id="cd03015">
    <property type="entry name" value="PRX_Typ2cys"/>
    <property type="match status" value="1"/>
</dbReference>
<dbReference type="FunFam" id="3.40.30.10:FF:000002">
    <property type="entry name" value="Alkyl hydroperoxide reductase C"/>
    <property type="match status" value="1"/>
</dbReference>
<dbReference type="Gene3D" id="3.40.30.10">
    <property type="entry name" value="Glutaredoxin"/>
    <property type="match status" value="1"/>
</dbReference>
<dbReference type="InterPro" id="IPR017559">
    <property type="entry name" value="AhpC"/>
</dbReference>
<dbReference type="InterPro" id="IPR000866">
    <property type="entry name" value="AhpC/TSA"/>
</dbReference>
<dbReference type="InterPro" id="IPR050217">
    <property type="entry name" value="Peroxiredoxin"/>
</dbReference>
<dbReference type="InterPro" id="IPR024706">
    <property type="entry name" value="Peroxiredoxin_AhpC-typ"/>
</dbReference>
<dbReference type="InterPro" id="IPR019479">
    <property type="entry name" value="Peroxiredoxin_C"/>
</dbReference>
<dbReference type="InterPro" id="IPR036249">
    <property type="entry name" value="Thioredoxin-like_sf"/>
</dbReference>
<dbReference type="InterPro" id="IPR013766">
    <property type="entry name" value="Thioredoxin_domain"/>
</dbReference>
<dbReference type="NCBIfam" id="TIGR03137">
    <property type="entry name" value="AhpC"/>
    <property type="match status" value="1"/>
</dbReference>
<dbReference type="PANTHER" id="PTHR10681:SF121">
    <property type="entry name" value="ALKYL HYDROPEROXIDE REDUCTASE C"/>
    <property type="match status" value="1"/>
</dbReference>
<dbReference type="PANTHER" id="PTHR10681">
    <property type="entry name" value="THIOREDOXIN PEROXIDASE"/>
    <property type="match status" value="1"/>
</dbReference>
<dbReference type="Pfam" id="PF10417">
    <property type="entry name" value="1-cysPrx_C"/>
    <property type="match status" value="1"/>
</dbReference>
<dbReference type="Pfam" id="PF00578">
    <property type="entry name" value="AhpC-TSA"/>
    <property type="match status" value="1"/>
</dbReference>
<dbReference type="PIRSF" id="PIRSF000239">
    <property type="entry name" value="AHPC"/>
    <property type="match status" value="1"/>
</dbReference>
<dbReference type="SUPFAM" id="SSF52833">
    <property type="entry name" value="Thioredoxin-like"/>
    <property type="match status" value="1"/>
</dbReference>
<dbReference type="PROSITE" id="PS51352">
    <property type="entry name" value="THIOREDOXIN_2"/>
    <property type="match status" value="1"/>
</dbReference>
<evidence type="ECO:0000250" key="1"/>
<evidence type="ECO:0000250" key="2">
    <source>
        <dbReference type="UniProtKB" id="P0A251"/>
    </source>
</evidence>
<evidence type="ECO:0000250" key="3">
    <source>
        <dbReference type="UniProtKB" id="P0AE08"/>
    </source>
</evidence>
<evidence type="ECO:0000255" key="4">
    <source>
        <dbReference type="PROSITE-ProRule" id="PRU00691"/>
    </source>
</evidence>
<evidence type="ECO:0000305" key="5"/>
<gene>
    <name type="primary">ahpC</name>
    <name type="ordered locus">c0694</name>
</gene>
<sequence length="187" mass="20761">MSLINTKIKPFKNQAFKNGEFIEITEKDTEGRWSVFFFYPADFTFVCPTELGDVADHYEELQKLGVDVYAVSTDTHFTHKAWHSSSETIAKIKYAMIGDPTGALTRNFDNMREDEGLADRATFVVDPQGIIQAIEVTAEGIGRDASDLLRKIKAAQYVASHPGEVCPAKWKEGEATLAPSLDLVGKI</sequence>
<protein>
    <recommendedName>
        <fullName>Alkyl hydroperoxide reductase C</fullName>
        <ecNumber evidence="2">1.11.1.26</ecNumber>
    </recommendedName>
    <alternativeName>
        <fullName>Alkyl hydroperoxide reductase protein C22</fullName>
    </alternativeName>
    <alternativeName>
        <fullName>Peroxiredoxin</fullName>
    </alternativeName>
    <alternativeName>
        <fullName>SCRP-23</fullName>
    </alternativeName>
    <alternativeName>
        <fullName>Sulfate starvation-induced protein 8</fullName>
        <shortName>SSI8</shortName>
    </alternativeName>
    <alternativeName>
        <fullName>Thioredoxin peroxidase</fullName>
    </alternativeName>
</protein>
<reference key="1">
    <citation type="journal article" date="2002" name="Proc. Natl. Acad. Sci. U.S.A.">
        <title>Extensive mosaic structure revealed by the complete genome sequence of uropathogenic Escherichia coli.</title>
        <authorList>
            <person name="Welch R.A."/>
            <person name="Burland V."/>
            <person name="Plunkett G. III"/>
            <person name="Redford P."/>
            <person name="Roesch P."/>
            <person name="Rasko D."/>
            <person name="Buckles E.L."/>
            <person name="Liou S.-R."/>
            <person name="Boutin A."/>
            <person name="Hackett J."/>
            <person name="Stroud D."/>
            <person name="Mayhew G.F."/>
            <person name="Rose D.J."/>
            <person name="Zhou S."/>
            <person name="Schwartz D.C."/>
            <person name="Perna N.T."/>
            <person name="Mobley H.L.T."/>
            <person name="Donnenberg M.S."/>
            <person name="Blattner F.R."/>
        </authorList>
    </citation>
    <scope>NUCLEOTIDE SEQUENCE [LARGE SCALE GENOMIC DNA]</scope>
    <source>
        <strain>CFT073 / ATCC 700928 / UPEC</strain>
    </source>
</reference>
<keyword id="KW-0007">Acetylation</keyword>
<keyword id="KW-0049">Antioxidant</keyword>
<keyword id="KW-0963">Cytoplasm</keyword>
<keyword id="KW-1015">Disulfide bond</keyword>
<keyword id="KW-0560">Oxidoreductase</keyword>
<keyword id="KW-0575">Peroxidase</keyword>
<keyword id="KW-0676">Redox-active center</keyword>
<keyword id="KW-1185">Reference proteome</keyword>
<name>AHPC_ECOL6</name>
<accession>P0AE09</accession>
<accession>P26427</accession>
<proteinExistence type="inferred from homology"/>